<evidence type="ECO:0000255" key="1">
    <source>
        <dbReference type="HAMAP-Rule" id="MF_03175"/>
    </source>
</evidence>
<evidence type="ECO:0000256" key="2">
    <source>
        <dbReference type="SAM" id="MobiDB-lite"/>
    </source>
</evidence>
<protein>
    <recommendedName>
        <fullName evidence="1">Methionine aminopeptidase 2-1</fullName>
        <shortName evidence="1">MAP 2-1</shortName>
        <shortName evidence="1">MetAP 2-1</shortName>
        <ecNumber evidence="1">3.4.11.18</ecNumber>
    </recommendedName>
    <alternativeName>
        <fullName evidence="1">Peptidase M</fullName>
    </alternativeName>
</protein>
<feature type="chain" id="PRO_0000407608" description="Methionine aminopeptidase 2-1">
    <location>
        <begin position="1"/>
        <end position="445"/>
    </location>
</feature>
<feature type="region of interest" description="Disordered" evidence="2">
    <location>
        <begin position="1"/>
        <end position="99"/>
    </location>
</feature>
<feature type="compositionally biased region" description="Basic residues" evidence="2">
    <location>
        <begin position="61"/>
        <end position="75"/>
    </location>
</feature>
<feature type="binding site" evidence="1">
    <location>
        <position position="198"/>
    </location>
    <ligand>
        <name>substrate</name>
    </ligand>
</feature>
<feature type="binding site" evidence="1">
    <location>
        <position position="218"/>
    </location>
    <ligand>
        <name>a divalent metal cation</name>
        <dbReference type="ChEBI" id="CHEBI:60240"/>
        <label>1</label>
    </ligand>
</feature>
<feature type="binding site" evidence="1">
    <location>
        <position position="229"/>
    </location>
    <ligand>
        <name>a divalent metal cation</name>
        <dbReference type="ChEBI" id="CHEBI:60240"/>
        <label>1</label>
    </ligand>
</feature>
<feature type="binding site" evidence="1">
    <location>
        <position position="229"/>
    </location>
    <ligand>
        <name>a divalent metal cation</name>
        <dbReference type="ChEBI" id="CHEBI:60240"/>
        <label>2</label>
        <note>catalytic</note>
    </ligand>
</feature>
<feature type="binding site" evidence="1">
    <location>
        <position position="298"/>
    </location>
    <ligand>
        <name>a divalent metal cation</name>
        <dbReference type="ChEBI" id="CHEBI:60240"/>
        <label>2</label>
        <note>catalytic</note>
    </ligand>
</feature>
<feature type="binding site" evidence="1">
    <location>
        <position position="306"/>
    </location>
    <ligand>
        <name>substrate</name>
    </ligand>
</feature>
<feature type="binding site" evidence="1">
    <location>
        <position position="331"/>
    </location>
    <ligand>
        <name>a divalent metal cation</name>
        <dbReference type="ChEBI" id="CHEBI:60240"/>
        <label>2</label>
        <note>catalytic</note>
    </ligand>
</feature>
<feature type="binding site" evidence="1">
    <location>
        <position position="426"/>
    </location>
    <ligand>
        <name>a divalent metal cation</name>
        <dbReference type="ChEBI" id="CHEBI:60240"/>
        <label>1</label>
    </ligand>
</feature>
<feature type="binding site" evidence="1">
    <location>
        <position position="426"/>
    </location>
    <ligand>
        <name>a divalent metal cation</name>
        <dbReference type="ChEBI" id="CHEBI:60240"/>
        <label>2</label>
        <note>catalytic</note>
    </ligand>
</feature>
<comment type="function">
    <text evidence="1">Cotranslationally removes the N-terminal methionine from nascent proteins. The N-terminal methionine is often cleaved when the second residue in the primary sequence is small and uncharged (Met-Ala-, Cys, Gly, Pro, Ser, Thr, or Val).</text>
</comment>
<comment type="catalytic activity">
    <reaction evidence="1">
        <text>Release of N-terminal amino acids, preferentially methionine, from peptides and arylamides.</text>
        <dbReference type="EC" id="3.4.11.18"/>
    </reaction>
</comment>
<comment type="cofactor">
    <cofactor evidence="1">
        <name>Co(2+)</name>
        <dbReference type="ChEBI" id="CHEBI:48828"/>
    </cofactor>
    <cofactor evidence="1">
        <name>Zn(2+)</name>
        <dbReference type="ChEBI" id="CHEBI:29105"/>
    </cofactor>
    <cofactor evidence="1">
        <name>Mn(2+)</name>
        <dbReference type="ChEBI" id="CHEBI:29035"/>
    </cofactor>
    <cofactor evidence="1">
        <name>Fe(2+)</name>
        <dbReference type="ChEBI" id="CHEBI:29033"/>
    </cofactor>
    <text evidence="1">Binds 2 divalent metal cations per subunit. Has a high-affinity and a low affinity metal-binding site. The true nature of the physiological cofactor is under debate. The enzyme is active with cobalt, zinc, manganese or divalent iron ions. Most likely, methionine aminopeptidases function as mononuclear Fe(2+)-metalloproteases under physiological conditions, and the catalytically relevant metal-binding site has been assigned to the histidine-containing high-affinity site.</text>
</comment>
<comment type="subcellular location">
    <subcellularLocation>
        <location evidence="1">Cytoplasm</location>
    </subcellularLocation>
</comment>
<comment type="similarity">
    <text evidence="1">Belongs to the peptidase M24A family. Methionine aminopeptidase eukaryotic type 2 subfamily.</text>
</comment>
<keyword id="KW-0031">Aminopeptidase</keyword>
<keyword id="KW-0963">Cytoplasm</keyword>
<keyword id="KW-0378">Hydrolase</keyword>
<keyword id="KW-0479">Metal-binding</keyword>
<keyword id="KW-0645">Protease</keyword>
<keyword id="KW-1185">Reference proteome</keyword>
<name>MAP21_FUSV7</name>
<gene>
    <name type="ORF">NECHADRAFT_61369</name>
</gene>
<reference key="1">
    <citation type="journal article" date="2009" name="PLoS Genet.">
        <title>The genome of Nectria haematococca: contribution of supernumerary chromosomes to gene expansion.</title>
        <authorList>
            <person name="Coleman J.J."/>
            <person name="Rounsley S.D."/>
            <person name="Rodriguez-Carres M."/>
            <person name="Kuo A."/>
            <person name="Wasmann C.C."/>
            <person name="Grimwood J."/>
            <person name="Schmutz J."/>
            <person name="Taga M."/>
            <person name="White G.J."/>
            <person name="Zhou S."/>
            <person name="Schwartz D.C."/>
            <person name="Freitag M."/>
            <person name="Ma L.-J."/>
            <person name="Danchin E.G.J."/>
            <person name="Henrissat B."/>
            <person name="Coutinho P.M."/>
            <person name="Nelson D.R."/>
            <person name="Straney D."/>
            <person name="Napoli C.A."/>
            <person name="Barker B.M."/>
            <person name="Gribskov M."/>
            <person name="Rep M."/>
            <person name="Kroken S."/>
            <person name="Molnar I."/>
            <person name="Rensing C."/>
            <person name="Kennell J.C."/>
            <person name="Zamora J."/>
            <person name="Farman M.L."/>
            <person name="Selker E.U."/>
            <person name="Salamov A."/>
            <person name="Shapiro H."/>
            <person name="Pangilinan J."/>
            <person name="Lindquist E."/>
            <person name="Lamers C."/>
            <person name="Grigoriev I.V."/>
            <person name="Geiser D.M."/>
            <person name="Covert S.F."/>
            <person name="Temporini E."/>
            <person name="VanEtten H.D."/>
        </authorList>
    </citation>
    <scope>NUCLEOTIDE SEQUENCE [LARGE SCALE GENOMIC DNA]</scope>
    <source>
        <strain>ATCC MYA-4622 / CBS 123669 / FGSC 9596 / NRRL 45880 / 77-13-4</strain>
    </source>
</reference>
<proteinExistence type="inferred from homology"/>
<accession>C7YS77</accession>
<organism>
    <name type="scientific">Fusarium vanettenii (strain ATCC MYA-4622 / CBS 123669 / FGSC 9596 / NRRL 45880 / 77-13-4)</name>
    <name type="common">Fusarium solani subsp. pisi</name>
    <dbReference type="NCBI Taxonomy" id="660122"/>
    <lineage>
        <taxon>Eukaryota</taxon>
        <taxon>Fungi</taxon>
        <taxon>Dikarya</taxon>
        <taxon>Ascomycota</taxon>
        <taxon>Pezizomycotina</taxon>
        <taxon>Sordariomycetes</taxon>
        <taxon>Hypocreomycetidae</taxon>
        <taxon>Hypocreales</taxon>
        <taxon>Nectriaceae</taxon>
        <taxon>Fusarium</taxon>
        <taxon>Fusarium solani species complex</taxon>
        <taxon>Fusarium vanettenii</taxon>
    </lineage>
</organism>
<dbReference type="EC" id="3.4.11.18" evidence="1"/>
<dbReference type="EMBL" id="GG698899">
    <property type="protein sequence ID" value="EEU45587.1"/>
    <property type="molecule type" value="Genomic_DNA"/>
</dbReference>
<dbReference type="RefSeq" id="XP_003051300.1">
    <property type="nucleotide sequence ID" value="XM_003051254.1"/>
</dbReference>
<dbReference type="SMR" id="C7YS77"/>
<dbReference type="FunCoup" id="C7YS77">
    <property type="interactions" value="1191"/>
</dbReference>
<dbReference type="STRING" id="660122.C7YS77"/>
<dbReference type="EnsemblFungi" id="NechaT61369">
    <property type="protein sequence ID" value="NechaP61369"/>
    <property type="gene ID" value="NechaG61369"/>
</dbReference>
<dbReference type="GeneID" id="9668147"/>
<dbReference type="KEGG" id="nhe:NECHADRAFT_61369"/>
<dbReference type="VEuPathDB" id="FungiDB:NECHADRAFT_61369"/>
<dbReference type="eggNOG" id="KOG2775">
    <property type="taxonomic scope" value="Eukaryota"/>
</dbReference>
<dbReference type="HOGENOM" id="CLU_015857_7_1_1"/>
<dbReference type="InParanoid" id="C7YS77"/>
<dbReference type="OMA" id="PFAKRWL"/>
<dbReference type="OrthoDB" id="7848262at2759"/>
<dbReference type="Proteomes" id="UP000005206">
    <property type="component" value="Unassembled WGS sequence"/>
</dbReference>
<dbReference type="GO" id="GO:0005737">
    <property type="term" value="C:cytoplasm"/>
    <property type="evidence" value="ECO:0007669"/>
    <property type="project" value="UniProtKB-SubCell"/>
</dbReference>
<dbReference type="GO" id="GO:0004239">
    <property type="term" value="F:initiator methionyl aminopeptidase activity"/>
    <property type="evidence" value="ECO:0007669"/>
    <property type="project" value="UniProtKB-UniRule"/>
</dbReference>
<dbReference type="GO" id="GO:0046872">
    <property type="term" value="F:metal ion binding"/>
    <property type="evidence" value="ECO:0007669"/>
    <property type="project" value="UniProtKB-UniRule"/>
</dbReference>
<dbReference type="GO" id="GO:0070006">
    <property type="term" value="F:metalloaminopeptidase activity"/>
    <property type="evidence" value="ECO:0007669"/>
    <property type="project" value="UniProtKB-UniRule"/>
</dbReference>
<dbReference type="GO" id="GO:0006508">
    <property type="term" value="P:proteolysis"/>
    <property type="evidence" value="ECO:0007669"/>
    <property type="project" value="UniProtKB-KW"/>
</dbReference>
<dbReference type="CDD" id="cd01088">
    <property type="entry name" value="MetAP2"/>
    <property type="match status" value="1"/>
</dbReference>
<dbReference type="Gene3D" id="3.90.230.10">
    <property type="entry name" value="Creatinase/methionine aminopeptidase superfamily"/>
    <property type="match status" value="1"/>
</dbReference>
<dbReference type="Gene3D" id="1.10.10.10">
    <property type="entry name" value="Winged helix-like DNA-binding domain superfamily/Winged helix DNA-binding domain"/>
    <property type="match status" value="1"/>
</dbReference>
<dbReference type="HAMAP" id="MF_03175">
    <property type="entry name" value="MetAP_2_euk"/>
    <property type="match status" value="1"/>
</dbReference>
<dbReference type="InterPro" id="IPR036005">
    <property type="entry name" value="Creatinase/aminopeptidase-like"/>
</dbReference>
<dbReference type="InterPro" id="IPR050247">
    <property type="entry name" value="Met_Aminopeptidase_Type2"/>
</dbReference>
<dbReference type="InterPro" id="IPR000994">
    <property type="entry name" value="Pept_M24"/>
</dbReference>
<dbReference type="InterPro" id="IPR001714">
    <property type="entry name" value="Pept_M24_MAP"/>
</dbReference>
<dbReference type="InterPro" id="IPR002468">
    <property type="entry name" value="Pept_M24A_MAP2"/>
</dbReference>
<dbReference type="InterPro" id="IPR018349">
    <property type="entry name" value="Pept_M24A_MAP2_BS"/>
</dbReference>
<dbReference type="InterPro" id="IPR036388">
    <property type="entry name" value="WH-like_DNA-bd_sf"/>
</dbReference>
<dbReference type="InterPro" id="IPR036390">
    <property type="entry name" value="WH_DNA-bd_sf"/>
</dbReference>
<dbReference type="NCBIfam" id="TIGR00501">
    <property type="entry name" value="met_pdase_II"/>
    <property type="match status" value="1"/>
</dbReference>
<dbReference type="PANTHER" id="PTHR45777">
    <property type="entry name" value="METHIONINE AMINOPEPTIDASE 2"/>
    <property type="match status" value="1"/>
</dbReference>
<dbReference type="PANTHER" id="PTHR45777:SF2">
    <property type="entry name" value="METHIONINE AMINOPEPTIDASE 2"/>
    <property type="match status" value="1"/>
</dbReference>
<dbReference type="Pfam" id="PF00557">
    <property type="entry name" value="Peptidase_M24"/>
    <property type="match status" value="1"/>
</dbReference>
<dbReference type="PRINTS" id="PR00599">
    <property type="entry name" value="MAPEPTIDASE"/>
</dbReference>
<dbReference type="SUPFAM" id="SSF55920">
    <property type="entry name" value="Creatinase/aminopeptidase"/>
    <property type="match status" value="1"/>
</dbReference>
<dbReference type="SUPFAM" id="SSF46785">
    <property type="entry name" value="Winged helix' DNA-binding domain"/>
    <property type="match status" value="1"/>
</dbReference>
<dbReference type="PROSITE" id="PS01202">
    <property type="entry name" value="MAP_2"/>
    <property type="match status" value="1"/>
</dbReference>
<sequence length="445" mass="48913">MAAQVPTEALKELNVAEGSQKPGATAQSKTDAAGDEHGGDDSEDEADGHVDGAAPTGEATKKKKKRKPKKKKKHPTSQTDPPRVMISQLFPNKAYPKGEEVEYKDENNYRTTNEEKRHLDNLNSDFLADFREAAEIHRQVRQWTQKTVKPGQTLTEIAEGIENSVRALTGHDGLTEGDAMKAGMGFPCGLSLNHCAAHYTPNAGNKMVLQQEDVMKVDFGVHVNGRIVDSAFTMAFEPKYDNLLQAVKDATNAGIREAGIDARVGEIGGVIQEVMESFEVEIDGTTYPVKSIRNLTGHNILPYSIHGTKAVPIVKSNDQTKMEEGDVFAIETFGSTGNGYVRDDMETSHYAKRGDSQHVDLRLSSAKNLLNVINKNFGTLPFCRRYLDRLGSDKYLLGLNSLVNSGIVEAYPPLCDKKGSYTAQFEHTILIRPTVKEVVSRGDDY</sequence>